<dbReference type="EC" id="2.7.7.6" evidence="1"/>
<dbReference type="EMBL" id="CP000251">
    <property type="protein sequence ID" value="ABC83356.1"/>
    <property type="molecule type" value="Genomic_DNA"/>
</dbReference>
<dbReference type="RefSeq" id="WP_011422638.1">
    <property type="nucleotide sequence ID" value="NC_007760.1"/>
</dbReference>
<dbReference type="SMR" id="Q2IFJ5"/>
<dbReference type="STRING" id="290397.Adeh_3590"/>
<dbReference type="KEGG" id="ade:Adeh_3590"/>
<dbReference type="eggNOG" id="COG1758">
    <property type="taxonomic scope" value="Bacteria"/>
</dbReference>
<dbReference type="HOGENOM" id="CLU_125406_5_1_7"/>
<dbReference type="OrthoDB" id="9796300at2"/>
<dbReference type="Proteomes" id="UP000001935">
    <property type="component" value="Chromosome"/>
</dbReference>
<dbReference type="GO" id="GO:0000428">
    <property type="term" value="C:DNA-directed RNA polymerase complex"/>
    <property type="evidence" value="ECO:0007669"/>
    <property type="project" value="UniProtKB-KW"/>
</dbReference>
<dbReference type="GO" id="GO:0003677">
    <property type="term" value="F:DNA binding"/>
    <property type="evidence" value="ECO:0007669"/>
    <property type="project" value="UniProtKB-UniRule"/>
</dbReference>
<dbReference type="GO" id="GO:0003899">
    <property type="term" value="F:DNA-directed RNA polymerase activity"/>
    <property type="evidence" value="ECO:0007669"/>
    <property type="project" value="UniProtKB-UniRule"/>
</dbReference>
<dbReference type="GO" id="GO:0006351">
    <property type="term" value="P:DNA-templated transcription"/>
    <property type="evidence" value="ECO:0007669"/>
    <property type="project" value="UniProtKB-UniRule"/>
</dbReference>
<dbReference type="Gene3D" id="3.90.940.10">
    <property type="match status" value="1"/>
</dbReference>
<dbReference type="HAMAP" id="MF_00366">
    <property type="entry name" value="RNApol_bact_RpoZ"/>
    <property type="match status" value="1"/>
</dbReference>
<dbReference type="InterPro" id="IPR003716">
    <property type="entry name" value="DNA-dir_RNA_pol_omega"/>
</dbReference>
<dbReference type="InterPro" id="IPR006110">
    <property type="entry name" value="Pol_omega/Rpo6/RPB6"/>
</dbReference>
<dbReference type="InterPro" id="IPR036161">
    <property type="entry name" value="RPB6/omega-like_sf"/>
</dbReference>
<dbReference type="NCBIfam" id="TIGR00690">
    <property type="entry name" value="rpoZ"/>
    <property type="match status" value="1"/>
</dbReference>
<dbReference type="PANTHER" id="PTHR34476">
    <property type="entry name" value="DNA-DIRECTED RNA POLYMERASE SUBUNIT OMEGA"/>
    <property type="match status" value="1"/>
</dbReference>
<dbReference type="PANTHER" id="PTHR34476:SF1">
    <property type="entry name" value="DNA-DIRECTED RNA POLYMERASE SUBUNIT OMEGA"/>
    <property type="match status" value="1"/>
</dbReference>
<dbReference type="Pfam" id="PF01192">
    <property type="entry name" value="RNA_pol_Rpb6"/>
    <property type="match status" value="1"/>
</dbReference>
<dbReference type="SMART" id="SM01409">
    <property type="entry name" value="RNA_pol_Rpb6"/>
    <property type="match status" value="1"/>
</dbReference>
<dbReference type="SUPFAM" id="SSF63562">
    <property type="entry name" value="RPB6/omega subunit-like"/>
    <property type="match status" value="1"/>
</dbReference>
<reference key="1">
    <citation type="submission" date="2006-01" db="EMBL/GenBank/DDBJ databases">
        <title>Complete sequence of Anaeromyxobacter dehalogenans 2CP-C.</title>
        <authorList>
            <person name="Copeland A."/>
            <person name="Lucas S."/>
            <person name="Lapidus A."/>
            <person name="Barry K."/>
            <person name="Detter J.C."/>
            <person name="Glavina T."/>
            <person name="Hammon N."/>
            <person name="Israni S."/>
            <person name="Pitluck S."/>
            <person name="Brettin T."/>
            <person name="Bruce D."/>
            <person name="Han C."/>
            <person name="Tapia R."/>
            <person name="Gilna P."/>
            <person name="Kiss H."/>
            <person name="Schmutz J."/>
            <person name="Larimer F."/>
            <person name="Land M."/>
            <person name="Kyrpides N."/>
            <person name="Anderson I."/>
            <person name="Sanford R.A."/>
            <person name="Ritalahti K.M."/>
            <person name="Thomas H.S."/>
            <person name="Kirby J.R."/>
            <person name="Zhulin I.B."/>
            <person name="Loeffler F.E."/>
            <person name="Richardson P."/>
        </authorList>
    </citation>
    <scope>NUCLEOTIDE SEQUENCE [LARGE SCALE GENOMIC DNA]</scope>
    <source>
        <strain>2CP-C</strain>
    </source>
</reference>
<evidence type="ECO:0000255" key="1">
    <source>
        <dbReference type="HAMAP-Rule" id="MF_00366"/>
    </source>
</evidence>
<sequence length="88" mass="9776">MARVTVEDCLPMVDNRFALVLLATKRTRQLMAGARPLQAASKNKPPVLALREIATGKVRFDRSVRDALSGKFDKEKVNIPAGQTRTLR</sequence>
<name>RPOZ_ANADE</name>
<organism>
    <name type="scientific">Anaeromyxobacter dehalogenans (strain 2CP-C)</name>
    <dbReference type="NCBI Taxonomy" id="290397"/>
    <lineage>
        <taxon>Bacteria</taxon>
        <taxon>Pseudomonadati</taxon>
        <taxon>Myxococcota</taxon>
        <taxon>Myxococcia</taxon>
        <taxon>Myxococcales</taxon>
        <taxon>Cystobacterineae</taxon>
        <taxon>Anaeromyxobacteraceae</taxon>
        <taxon>Anaeromyxobacter</taxon>
    </lineage>
</organism>
<proteinExistence type="inferred from homology"/>
<accession>Q2IFJ5</accession>
<keyword id="KW-0240">DNA-directed RNA polymerase</keyword>
<keyword id="KW-0548">Nucleotidyltransferase</keyword>
<keyword id="KW-1185">Reference proteome</keyword>
<keyword id="KW-0804">Transcription</keyword>
<keyword id="KW-0808">Transferase</keyword>
<feature type="chain" id="PRO_0000237428" description="DNA-directed RNA polymerase subunit omega">
    <location>
        <begin position="1"/>
        <end position="88"/>
    </location>
</feature>
<gene>
    <name evidence="1" type="primary">rpoZ</name>
    <name type="ordered locus">Adeh_3590</name>
</gene>
<protein>
    <recommendedName>
        <fullName evidence="1">DNA-directed RNA polymerase subunit omega</fullName>
        <shortName evidence="1">RNAP omega subunit</shortName>
        <ecNumber evidence="1">2.7.7.6</ecNumber>
    </recommendedName>
    <alternativeName>
        <fullName evidence="1">RNA polymerase omega subunit</fullName>
    </alternativeName>
    <alternativeName>
        <fullName evidence="1">Transcriptase subunit omega</fullName>
    </alternativeName>
</protein>
<comment type="function">
    <text evidence="1">Promotes RNA polymerase assembly. Latches the N- and C-terminal regions of the beta' subunit thereby facilitating its interaction with the beta and alpha subunits.</text>
</comment>
<comment type="catalytic activity">
    <reaction evidence="1">
        <text>RNA(n) + a ribonucleoside 5'-triphosphate = RNA(n+1) + diphosphate</text>
        <dbReference type="Rhea" id="RHEA:21248"/>
        <dbReference type="Rhea" id="RHEA-COMP:14527"/>
        <dbReference type="Rhea" id="RHEA-COMP:17342"/>
        <dbReference type="ChEBI" id="CHEBI:33019"/>
        <dbReference type="ChEBI" id="CHEBI:61557"/>
        <dbReference type="ChEBI" id="CHEBI:140395"/>
        <dbReference type="EC" id="2.7.7.6"/>
    </reaction>
</comment>
<comment type="subunit">
    <text evidence="1">The RNAP catalytic core consists of 2 alpha, 1 beta, 1 beta' and 1 omega subunit. When a sigma factor is associated with the core the holoenzyme is formed, which can initiate transcription.</text>
</comment>
<comment type="similarity">
    <text evidence="1">Belongs to the RNA polymerase subunit omega family.</text>
</comment>